<reference key="1">
    <citation type="journal article" date="1998" name="J. Biol. Chem.">
        <title>Identification of the rat adapter Grb14 as an inhibitor of insulin actions.</title>
        <authorList>
            <person name="Kasus-Jacobi A."/>
            <person name="Perdereau D."/>
            <person name="Auzan C."/>
            <person name="Clauser E."/>
            <person name="van Obberghen E."/>
            <person name="Mauvais-Jarvis F."/>
            <person name="Girard J."/>
            <person name="Burnol A.-F."/>
        </authorList>
    </citation>
    <scope>NUCLEOTIDE SEQUENCE [MRNA]</scope>
    <source>
        <strain>Wistar</strain>
    </source>
</reference>
<reference key="2">
    <citation type="journal article" date="2012" name="Nat. Commun.">
        <title>Quantitative maps of protein phosphorylation sites across 14 different rat organs and tissues.</title>
        <authorList>
            <person name="Lundby A."/>
            <person name="Secher A."/>
            <person name="Lage K."/>
            <person name="Nordsborg N.B."/>
            <person name="Dmytriyev A."/>
            <person name="Lundby C."/>
            <person name="Olsen J.V."/>
        </authorList>
    </citation>
    <scope>PHOSPHORYLATION [LARGE SCALE ANALYSIS] AT SER-370 AND SER-373</scope>
    <scope>IDENTIFICATION BY MASS SPECTROMETRY [LARGE SCALE ANALYSIS]</scope>
</reference>
<accession>O88900</accession>
<feature type="initiator methionine" description="Removed" evidence="2">
    <location>
        <position position="1"/>
    </location>
</feature>
<feature type="chain" id="PRO_0000150350" description="Growth factor receptor-bound protein 14">
    <location>
        <begin position="2"/>
        <end position="538"/>
    </location>
</feature>
<feature type="domain" description="Ras-associating" evidence="4">
    <location>
        <begin position="104"/>
        <end position="190"/>
    </location>
</feature>
<feature type="domain" description="PH" evidence="3">
    <location>
        <begin position="232"/>
        <end position="340"/>
    </location>
</feature>
<feature type="domain" description="SH2" evidence="5">
    <location>
        <begin position="437"/>
        <end position="533"/>
    </location>
</feature>
<feature type="region of interest" description="Disordered" evidence="6">
    <location>
        <begin position="1"/>
        <end position="73"/>
    </location>
</feature>
<feature type="compositionally biased region" description="Basic and acidic residues" evidence="6">
    <location>
        <begin position="54"/>
        <end position="69"/>
    </location>
</feature>
<feature type="modified residue" description="N-acetylthreonine" evidence="2">
    <location>
        <position position="2"/>
    </location>
</feature>
<feature type="modified residue" description="Phosphoserine" evidence="8">
    <location>
        <position position="370"/>
    </location>
</feature>
<feature type="modified residue" description="Phosphoserine" evidence="8">
    <location>
        <position position="373"/>
    </location>
</feature>
<name>GRB14_RAT</name>
<gene>
    <name type="primary">Grb14</name>
</gene>
<proteinExistence type="evidence at protein level"/>
<organism>
    <name type="scientific">Rattus norvegicus</name>
    <name type="common">Rat</name>
    <dbReference type="NCBI Taxonomy" id="10116"/>
    <lineage>
        <taxon>Eukaryota</taxon>
        <taxon>Metazoa</taxon>
        <taxon>Chordata</taxon>
        <taxon>Craniata</taxon>
        <taxon>Vertebrata</taxon>
        <taxon>Euteleostomi</taxon>
        <taxon>Mammalia</taxon>
        <taxon>Eutheria</taxon>
        <taxon>Euarchontoglires</taxon>
        <taxon>Glires</taxon>
        <taxon>Rodentia</taxon>
        <taxon>Myomorpha</taxon>
        <taxon>Muroidea</taxon>
        <taxon>Muridae</taxon>
        <taxon>Murinae</taxon>
        <taxon>Rattus</taxon>
    </lineage>
</organism>
<sequence>MTTSLQDGQSAAGRAGAQDSPLAVQVCRVAQGKGDAQDPAQVPGLHALSPASDATRRGAMDRRKAKDLEVQETPSIPNPFPELCCSPLTSVLSAGLFPRSNSRKKQVIKVYSEDETSRALEVPSDVTARDVCQLLILKNHYVDDNSWTLFEHLSHTGVERTVEDHELLTEVLSHWVMEEDNKLYLRKNYAKYEFFKNPMYFFPEHMVSFATEMNGDRSLTQIPQVFLSSNTYPEIHGFLHAKEQGKKSWKKAYFFLRRSGLYFSTKGTSKEPRHLQFFSEFSTSNVYMSLAGKKKHGAPTPYGFCFKPTKAGGPRDLKMLCAEEDQSRMCWVTAIRLLKYGMQLYQNYMHPSQARSACSSQSVSPMRSVSENSLVAMDFSGQKTRVIDNPTEALSVAVEEGLAWRKKGCLRLGNHGSPTAPSQSSAVNMALHRSQPWFHHRISRDEAQQLITRQGPVDGVFLVRDSQSNPRTFVLSMSHGQKIKHFQIIPVEDDGEVFHTLDDGHTKFTDLIQLVEFYQLNKGVLPCKLKHYCARMAV</sequence>
<keyword id="KW-0007">Acetylation</keyword>
<keyword id="KW-0963">Cytoplasm</keyword>
<keyword id="KW-0967">Endosome</keyword>
<keyword id="KW-0472">Membrane</keyword>
<keyword id="KW-0597">Phosphoprotein</keyword>
<keyword id="KW-1185">Reference proteome</keyword>
<keyword id="KW-0727">SH2 domain</keyword>
<protein>
    <recommendedName>
        <fullName>Growth factor receptor-bound protein 14</fullName>
    </recommendedName>
    <alternativeName>
        <fullName>GRB14 adapter protein</fullName>
    </alternativeName>
</protein>
<evidence type="ECO:0000250" key="1"/>
<evidence type="ECO:0000250" key="2">
    <source>
        <dbReference type="UniProtKB" id="Q14449"/>
    </source>
</evidence>
<evidence type="ECO:0000255" key="3">
    <source>
        <dbReference type="PROSITE-ProRule" id="PRU00145"/>
    </source>
</evidence>
<evidence type="ECO:0000255" key="4">
    <source>
        <dbReference type="PROSITE-ProRule" id="PRU00166"/>
    </source>
</evidence>
<evidence type="ECO:0000255" key="5">
    <source>
        <dbReference type="PROSITE-ProRule" id="PRU00191"/>
    </source>
</evidence>
<evidence type="ECO:0000256" key="6">
    <source>
        <dbReference type="SAM" id="MobiDB-lite"/>
    </source>
</evidence>
<evidence type="ECO:0000305" key="7"/>
<evidence type="ECO:0007744" key="8">
    <source>
    </source>
</evidence>
<dbReference type="EMBL" id="AF076619">
    <property type="protein sequence ID" value="AAC61478.1"/>
    <property type="molecule type" value="mRNA"/>
</dbReference>
<dbReference type="RefSeq" id="NP_113811.1">
    <property type="nucleotide sequence ID" value="NM_031623.1"/>
</dbReference>
<dbReference type="SMR" id="O88900"/>
<dbReference type="BioGRID" id="248645">
    <property type="interactions" value="2"/>
</dbReference>
<dbReference type="FunCoup" id="O88900">
    <property type="interactions" value="175"/>
</dbReference>
<dbReference type="IntAct" id="O88900">
    <property type="interactions" value="3"/>
</dbReference>
<dbReference type="MINT" id="O88900"/>
<dbReference type="STRING" id="10116.ENSRNOP00000072564"/>
<dbReference type="iPTMnet" id="O88900"/>
<dbReference type="PhosphoSitePlus" id="O88900"/>
<dbReference type="PaxDb" id="10116-ENSRNOP00000046233"/>
<dbReference type="GeneID" id="58844"/>
<dbReference type="KEGG" id="rno:58844"/>
<dbReference type="UCSC" id="RGD:61869">
    <property type="organism name" value="rat"/>
</dbReference>
<dbReference type="AGR" id="RGD:61869"/>
<dbReference type="CTD" id="2888"/>
<dbReference type="RGD" id="61869">
    <property type="gene designation" value="Grb14"/>
</dbReference>
<dbReference type="eggNOG" id="KOG3751">
    <property type="taxonomic scope" value="Eukaryota"/>
</dbReference>
<dbReference type="InParanoid" id="O88900"/>
<dbReference type="PhylomeDB" id="O88900"/>
<dbReference type="Reactome" id="R-RNO-210993">
    <property type="pathway name" value="Tie2 Signaling"/>
</dbReference>
<dbReference type="PRO" id="PR:O88900"/>
<dbReference type="Proteomes" id="UP000002494">
    <property type="component" value="Unplaced"/>
</dbReference>
<dbReference type="GO" id="GO:0005737">
    <property type="term" value="C:cytoplasm"/>
    <property type="evidence" value="ECO:0000266"/>
    <property type="project" value="RGD"/>
</dbReference>
<dbReference type="GO" id="GO:0005768">
    <property type="term" value="C:endosome"/>
    <property type="evidence" value="ECO:0000314"/>
    <property type="project" value="RGD"/>
</dbReference>
<dbReference type="GO" id="GO:0010008">
    <property type="term" value="C:endosome membrane"/>
    <property type="evidence" value="ECO:0007669"/>
    <property type="project" value="UniProtKB-SubCell"/>
</dbReference>
<dbReference type="GO" id="GO:0043231">
    <property type="term" value="C:intracellular membrane-bounded organelle"/>
    <property type="evidence" value="ECO:0000266"/>
    <property type="project" value="RGD"/>
</dbReference>
<dbReference type="GO" id="GO:0005886">
    <property type="term" value="C:plasma membrane"/>
    <property type="evidence" value="ECO:0000266"/>
    <property type="project" value="RGD"/>
</dbReference>
<dbReference type="GO" id="GO:0060090">
    <property type="term" value="F:molecular adaptor activity"/>
    <property type="evidence" value="ECO:0000266"/>
    <property type="project" value="RGD"/>
</dbReference>
<dbReference type="GO" id="GO:0051219">
    <property type="term" value="F:phosphoprotein binding"/>
    <property type="evidence" value="ECO:0000353"/>
    <property type="project" value="RGD"/>
</dbReference>
<dbReference type="GO" id="GO:0030674">
    <property type="term" value="F:protein-macromolecule adaptor activity"/>
    <property type="evidence" value="ECO:0000266"/>
    <property type="project" value="RGD"/>
</dbReference>
<dbReference type="GO" id="GO:0030971">
    <property type="term" value="F:receptor tyrosine kinase binding"/>
    <property type="evidence" value="ECO:0000266"/>
    <property type="project" value="RGD"/>
</dbReference>
<dbReference type="GO" id="GO:0032869">
    <property type="term" value="P:cellular response to insulin stimulus"/>
    <property type="evidence" value="ECO:0000315"/>
    <property type="project" value="CAFA"/>
</dbReference>
<dbReference type="GO" id="GO:0008286">
    <property type="term" value="P:insulin receptor signaling pathway"/>
    <property type="evidence" value="ECO:0000314"/>
    <property type="project" value="RGD"/>
</dbReference>
<dbReference type="GO" id="GO:0035556">
    <property type="term" value="P:intracellular signal transduction"/>
    <property type="evidence" value="ECO:0000270"/>
    <property type="project" value="RGD"/>
</dbReference>
<dbReference type="GO" id="GO:0046627">
    <property type="term" value="P:negative regulation of insulin receptor signaling pathway"/>
    <property type="evidence" value="ECO:0000314"/>
    <property type="project" value="RGD"/>
</dbReference>
<dbReference type="GO" id="GO:1904145">
    <property type="term" value="P:negative regulation of meiotic cell cycle process involved in oocyte maturation"/>
    <property type="evidence" value="ECO:0000315"/>
    <property type="project" value="CAFA"/>
</dbReference>
<dbReference type="CDD" id="cd01259">
    <property type="entry name" value="PH_APBB1IP"/>
    <property type="match status" value="1"/>
</dbReference>
<dbReference type="CDD" id="cd10414">
    <property type="entry name" value="SH2_Grb14"/>
    <property type="match status" value="1"/>
</dbReference>
<dbReference type="DisProt" id="DP00490"/>
<dbReference type="FunFam" id="3.30.505.10:FF:000015">
    <property type="entry name" value="Growth factor receptor-bound protein 10 isoform X1"/>
    <property type="match status" value="1"/>
</dbReference>
<dbReference type="FunFam" id="2.30.29.30:FF:000714">
    <property type="entry name" value="Growth factor receptor-bound protein 14"/>
    <property type="match status" value="1"/>
</dbReference>
<dbReference type="FunFam" id="3.10.20.90:FF:000133">
    <property type="entry name" value="growth factor receptor-bound protein 14 isoform X2"/>
    <property type="match status" value="1"/>
</dbReference>
<dbReference type="Gene3D" id="3.10.20.90">
    <property type="entry name" value="Phosphatidylinositol 3-kinase Catalytic Subunit, Chain A, domain 1"/>
    <property type="match status" value="1"/>
</dbReference>
<dbReference type="Gene3D" id="2.30.29.30">
    <property type="entry name" value="Pleckstrin-homology domain (PH domain)/Phosphotyrosine-binding domain (PTB)"/>
    <property type="match status" value="1"/>
</dbReference>
<dbReference type="Gene3D" id="3.30.505.10">
    <property type="entry name" value="SH2 domain"/>
    <property type="match status" value="1"/>
</dbReference>
<dbReference type="InterPro" id="IPR015042">
    <property type="entry name" value="BPS-dom"/>
</dbReference>
<dbReference type="InterPro" id="IPR039664">
    <property type="entry name" value="GRB/APBB1IP"/>
</dbReference>
<dbReference type="InterPro" id="IPR035034">
    <property type="entry name" value="Grb14_SH2"/>
</dbReference>
<dbReference type="InterPro" id="IPR011993">
    <property type="entry name" value="PH-like_dom_sf"/>
</dbReference>
<dbReference type="InterPro" id="IPR039665">
    <property type="entry name" value="PH_APBB1IP"/>
</dbReference>
<dbReference type="InterPro" id="IPR001849">
    <property type="entry name" value="PH_domain"/>
</dbReference>
<dbReference type="InterPro" id="IPR000159">
    <property type="entry name" value="RA_dom"/>
</dbReference>
<dbReference type="InterPro" id="IPR000980">
    <property type="entry name" value="SH2"/>
</dbReference>
<dbReference type="InterPro" id="IPR036860">
    <property type="entry name" value="SH2_dom_sf"/>
</dbReference>
<dbReference type="InterPro" id="IPR029071">
    <property type="entry name" value="Ubiquitin-like_domsf"/>
</dbReference>
<dbReference type="PANTHER" id="PTHR11243">
    <property type="entry name" value="GROWTH FACTOR RECEPTOR-BOUND PROTEIN"/>
    <property type="match status" value="1"/>
</dbReference>
<dbReference type="PANTHER" id="PTHR11243:SF22">
    <property type="entry name" value="GROWTH FACTOR RECEPTOR-BOUND PROTEIN 14"/>
    <property type="match status" value="1"/>
</dbReference>
<dbReference type="Pfam" id="PF08947">
    <property type="entry name" value="BPS"/>
    <property type="match status" value="1"/>
</dbReference>
<dbReference type="Pfam" id="PF00169">
    <property type="entry name" value="PH"/>
    <property type="match status" value="1"/>
</dbReference>
<dbReference type="Pfam" id="PF21989">
    <property type="entry name" value="RA_2"/>
    <property type="match status" value="1"/>
</dbReference>
<dbReference type="Pfam" id="PF00017">
    <property type="entry name" value="SH2"/>
    <property type="match status" value="1"/>
</dbReference>
<dbReference type="PRINTS" id="PR00401">
    <property type="entry name" value="SH2DOMAIN"/>
</dbReference>
<dbReference type="SMART" id="SM00233">
    <property type="entry name" value="PH"/>
    <property type="match status" value="1"/>
</dbReference>
<dbReference type="SMART" id="SM00314">
    <property type="entry name" value="RA"/>
    <property type="match status" value="1"/>
</dbReference>
<dbReference type="SMART" id="SM00252">
    <property type="entry name" value="SH2"/>
    <property type="match status" value="1"/>
</dbReference>
<dbReference type="SUPFAM" id="SSF50729">
    <property type="entry name" value="PH domain-like"/>
    <property type="match status" value="1"/>
</dbReference>
<dbReference type="SUPFAM" id="SSF55550">
    <property type="entry name" value="SH2 domain"/>
    <property type="match status" value="1"/>
</dbReference>
<dbReference type="SUPFAM" id="SSF54236">
    <property type="entry name" value="Ubiquitin-like"/>
    <property type="match status" value="1"/>
</dbReference>
<dbReference type="PROSITE" id="PS50003">
    <property type="entry name" value="PH_DOMAIN"/>
    <property type="match status" value="1"/>
</dbReference>
<dbReference type="PROSITE" id="PS50200">
    <property type="entry name" value="RA"/>
    <property type="match status" value="1"/>
</dbReference>
<dbReference type="PROSITE" id="PS50001">
    <property type="entry name" value="SH2"/>
    <property type="match status" value="1"/>
</dbReference>
<comment type="function">
    <text evidence="1">Adapter protein which modulates coupling of cell surface receptor kinases with specific signaling pathways. Binds to, and suppresses signals from, the activated insulin receptor (INSR). Potent inhibitor of insulin-stimulated MAPK3 phosphorylation. Plays a critical role regulating PDPK1 membrane translocation in response to insulin stimulation and serves as an adapter protein to recruit PDPK1 to activated insulin receptor, thus promoting PKB/AKT1 phosphorylation and transduction of the insulin signal (By similarity).</text>
</comment>
<comment type="subunit">
    <text evidence="1">Interacts with the cytoplasmic domain of the autophosphorylated insulin receptor, through the SH2 domain. Interacts with GRB14 (via BPS domain); this interaction protects the tyrosines in the activation loop on INSR from dephosphorylation (By similarity). Binds to the ankyrin repeat region of TNKS2 via its N-terminus. Interacts with activated NRAS. Interacts (via SH2 domain) with TEK/TIE2 (tyrosine phosphorylated) (By similarity).</text>
</comment>
<comment type="interaction">
    <interactant intactId="EBI-7639197">
        <id>O88900</id>
    </interactant>
    <interactant intactId="EBI-1028277">
        <id>P11362</id>
        <label>FGFR1</label>
    </interactant>
    <organismsDiffer>true</organismsDiffer>
    <experiments>3</experiments>
</comment>
<comment type="subcellular location">
    <subcellularLocation>
        <location evidence="2">Cytoplasm</location>
    </subcellularLocation>
    <subcellularLocation>
        <location evidence="2">Endosome membrane</location>
        <topology evidence="2">Peripheral membrane protein</topology>
    </subcellularLocation>
    <text evidence="2">Upon insulin stimulation, translocates to the plasma membrane.</text>
</comment>
<comment type="domain">
    <text>The PH domain binds relatively non-specifically and with low affinity to several phosphoinositides, the best binder being PI(3,4,5)P3.</text>
</comment>
<comment type="PTM">
    <text evidence="1">Phosphorylated on serine residues. Phosphorylated on tyrosine residues by TEK/TIE2 (By similarity).</text>
</comment>
<comment type="similarity">
    <text evidence="7">Belongs to the GRB7/10/14 family.</text>
</comment>